<evidence type="ECO:0000255" key="1">
    <source>
        <dbReference type="HAMAP-Rule" id="MF_00156"/>
    </source>
</evidence>
<keyword id="KW-0963">Cytoplasm</keyword>
<keyword id="KW-0460">Magnesium</keyword>
<keyword id="KW-0479">Metal-binding</keyword>
<keyword id="KW-0566">Pantothenate biosynthesis</keyword>
<keyword id="KW-0808">Transferase</keyword>
<protein>
    <recommendedName>
        <fullName evidence="1">3-methyl-2-oxobutanoate hydroxymethyltransferase</fullName>
        <ecNumber evidence="1">2.1.2.11</ecNumber>
    </recommendedName>
    <alternativeName>
        <fullName evidence="1">Ketopantoate hydroxymethyltransferase</fullName>
        <shortName evidence="1">KPHMT</shortName>
    </alternativeName>
</protein>
<proteinExistence type="inferred from homology"/>
<dbReference type="EC" id="2.1.2.11" evidence="1"/>
<dbReference type="EMBL" id="CP000088">
    <property type="protein sequence ID" value="AAZ55019.1"/>
    <property type="molecule type" value="Genomic_DNA"/>
</dbReference>
<dbReference type="RefSeq" id="WP_011291428.1">
    <property type="nucleotide sequence ID" value="NC_007333.1"/>
</dbReference>
<dbReference type="SMR" id="Q47R98"/>
<dbReference type="STRING" id="269800.Tfu_0981"/>
<dbReference type="KEGG" id="tfu:Tfu_0981"/>
<dbReference type="eggNOG" id="COG0413">
    <property type="taxonomic scope" value="Bacteria"/>
</dbReference>
<dbReference type="HOGENOM" id="CLU_036645_1_0_11"/>
<dbReference type="OrthoDB" id="9781789at2"/>
<dbReference type="UniPathway" id="UPA00028">
    <property type="reaction ID" value="UER00003"/>
</dbReference>
<dbReference type="GO" id="GO:0005737">
    <property type="term" value="C:cytoplasm"/>
    <property type="evidence" value="ECO:0007669"/>
    <property type="project" value="UniProtKB-SubCell"/>
</dbReference>
<dbReference type="GO" id="GO:0003864">
    <property type="term" value="F:3-methyl-2-oxobutanoate hydroxymethyltransferase activity"/>
    <property type="evidence" value="ECO:0007669"/>
    <property type="project" value="UniProtKB-UniRule"/>
</dbReference>
<dbReference type="GO" id="GO:0000287">
    <property type="term" value="F:magnesium ion binding"/>
    <property type="evidence" value="ECO:0007669"/>
    <property type="project" value="TreeGrafter"/>
</dbReference>
<dbReference type="GO" id="GO:0015940">
    <property type="term" value="P:pantothenate biosynthetic process"/>
    <property type="evidence" value="ECO:0007669"/>
    <property type="project" value="UniProtKB-UniRule"/>
</dbReference>
<dbReference type="CDD" id="cd06557">
    <property type="entry name" value="KPHMT-like"/>
    <property type="match status" value="1"/>
</dbReference>
<dbReference type="FunFam" id="3.20.20.60:FF:000003">
    <property type="entry name" value="3-methyl-2-oxobutanoate hydroxymethyltransferase"/>
    <property type="match status" value="1"/>
</dbReference>
<dbReference type="Gene3D" id="3.20.20.60">
    <property type="entry name" value="Phosphoenolpyruvate-binding domains"/>
    <property type="match status" value="1"/>
</dbReference>
<dbReference type="HAMAP" id="MF_00156">
    <property type="entry name" value="PanB"/>
    <property type="match status" value="1"/>
</dbReference>
<dbReference type="InterPro" id="IPR003700">
    <property type="entry name" value="Pantoate_hydroxy_MeTrfase"/>
</dbReference>
<dbReference type="InterPro" id="IPR015813">
    <property type="entry name" value="Pyrv/PenolPyrv_kinase-like_dom"/>
</dbReference>
<dbReference type="InterPro" id="IPR040442">
    <property type="entry name" value="Pyrv_kinase-like_dom_sf"/>
</dbReference>
<dbReference type="NCBIfam" id="TIGR00222">
    <property type="entry name" value="panB"/>
    <property type="match status" value="1"/>
</dbReference>
<dbReference type="NCBIfam" id="NF001452">
    <property type="entry name" value="PRK00311.1"/>
    <property type="match status" value="1"/>
</dbReference>
<dbReference type="PANTHER" id="PTHR20881">
    <property type="entry name" value="3-METHYL-2-OXOBUTANOATE HYDROXYMETHYLTRANSFERASE"/>
    <property type="match status" value="1"/>
</dbReference>
<dbReference type="PANTHER" id="PTHR20881:SF0">
    <property type="entry name" value="3-METHYL-2-OXOBUTANOATE HYDROXYMETHYLTRANSFERASE"/>
    <property type="match status" value="1"/>
</dbReference>
<dbReference type="Pfam" id="PF02548">
    <property type="entry name" value="Pantoate_transf"/>
    <property type="match status" value="1"/>
</dbReference>
<dbReference type="PIRSF" id="PIRSF000388">
    <property type="entry name" value="Pantoate_hydroxy_MeTrfase"/>
    <property type="match status" value="1"/>
</dbReference>
<dbReference type="SUPFAM" id="SSF51621">
    <property type="entry name" value="Phosphoenolpyruvate/pyruvate domain"/>
    <property type="match status" value="1"/>
</dbReference>
<reference key="1">
    <citation type="journal article" date="2007" name="J. Bacteriol.">
        <title>Genome sequence and analysis of the soil cellulolytic actinomycete Thermobifida fusca YX.</title>
        <authorList>
            <person name="Lykidis A."/>
            <person name="Mavromatis K."/>
            <person name="Ivanova N."/>
            <person name="Anderson I."/>
            <person name="Land M."/>
            <person name="DiBartolo G."/>
            <person name="Martinez M."/>
            <person name="Lapidus A."/>
            <person name="Lucas S."/>
            <person name="Copeland A."/>
            <person name="Richardson P."/>
            <person name="Wilson D.B."/>
            <person name="Kyrpides N."/>
        </authorList>
    </citation>
    <scope>NUCLEOTIDE SEQUENCE [LARGE SCALE GENOMIC DNA]</scope>
    <source>
        <strain>YX</strain>
    </source>
</reference>
<gene>
    <name evidence="1" type="primary">panB</name>
    <name type="ordered locus">Tfu_0981</name>
</gene>
<accession>Q47R98</accession>
<comment type="function">
    <text evidence="1">Catalyzes the reversible reaction in which hydroxymethyl group from 5,10-methylenetetrahydrofolate is transferred onto alpha-ketoisovalerate to form ketopantoate.</text>
</comment>
<comment type="catalytic activity">
    <reaction evidence="1">
        <text>3-methyl-2-oxobutanoate + (6R)-5,10-methylene-5,6,7,8-tetrahydrofolate + H2O = 2-dehydropantoate + (6S)-5,6,7,8-tetrahydrofolate</text>
        <dbReference type="Rhea" id="RHEA:11824"/>
        <dbReference type="ChEBI" id="CHEBI:11561"/>
        <dbReference type="ChEBI" id="CHEBI:11851"/>
        <dbReference type="ChEBI" id="CHEBI:15377"/>
        <dbReference type="ChEBI" id="CHEBI:15636"/>
        <dbReference type="ChEBI" id="CHEBI:57453"/>
        <dbReference type="EC" id="2.1.2.11"/>
    </reaction>
</comment>
<comment type="cofactor">
    <cofactor evidence="1">
        <name>Mg(2+)</name>
        <dbReference type="ChEBI" id="CHEBI:18420"/>
    </cofactor>
    <text evidence="1">Binds 1 Mg(2+) ion per subunit.</text>
</comment>
<comment type="pathway">
    <text evidence="1">Cofactor biosynthesis; (R)-pantothenate biosynthesis; (R)-pantoate from 3-methyl-2-oxobutanoate: step 1/2.</text>
</comment>
<comment type="subunit">
    <text evidence="1">Homodecamer; pentamer of dimers.</text>
</comment>
<comment type="subcellular location">
    <subcellularLocation>
        <location evidence="1">Cytoplasm</location>
    </subcellularLocation>
</comment>
<comment type="similarity">
    <text evidence="1">Belongs to the PanB family.</text>
</comment>
<sequence length="280" mass="29415">MSSHTPAPALYGGSANRRVTVQDLAAAKERGERWPMLTAYDALTARIFDEAGIPVLLVGDSAAMVVFGYDSTIPVTLDDMIPLTAAVSRATKRALVVADLPFGSYQAGPEQALESAARLMKEGGAQAVKLEGGHRVIAQVEALVSAGIPVMGHIGLTPQSVNVLGGYRVQGRSEEAAEALLSDAKELERAGVFSVVLECVPARVGAEITRQLTVPTIGIGAGPDTDAQVLVWQDMAGLSPRVAKFVKSYANLAEQLRDAATSFAEEVVAGTFPDEQHSYA</sequence>
<feature type="chain" id="PRO_0000297398" description="3-methyl-2-oxobutanoate hydroxymethyltransferase">
    <location>
        <begin position="1"/>
        <end position="280"/>
    </location>
</feature>
<feature type="active site" description="Proton acceptor" evidence="1">
    <location>
        <position position="198"/>
    </location>
</feature>
<feature type="binding site" evidence="1">
    <location>
        <begin position="60"/>
        <end position="61"/>
    </location>
    <ligand>
        <name>3-methyl-2-oxobutanoate</name>
        <dbReference type="ChEBI" id="CHEBI:11851"/>
    </ligand>
</feature>
<feature type="binding site" evidence="1">
    <location>
        <position position="60"/>
    </location>
    <ligand>
        <name>Mg(2+)</name>
        <dbReference type="ChEBI" id="CHEBI:18420"/>
    </ligand>
</feature>
<feature type="binding site" evidence="1">
    <location>
        <position position="99"/>
    </location>
    <ligand>
        <name>3-methyl-2-oxobutanoate</name>
        <dbReference type="ChEBI" id="CHEBI:11851"/>
    </ligand>
</feature>
<feature type="binding site" evidence="1">
    <location>
        <position position="99"/>
    </location>
    <ligand>
        <name>Mg(2+)</name>
        <dbReference type="ChEBI" id="CHEBI:18420"/>
    </ligand>
</feature>
<feature type="binding site" evidence="1">
    <location>
        <position position="129"/>
    </location>
    <ligand>
        <name>3-methyl-2-oxobutanoate</name>
        <dbReference type="ChEBI" id="CHEBI:11851"/>
    </ligand>
</feature>
<feature type="binding site" evidence="1">
    <location>
        <position position="131"/>
    </location>
    <ligand>
        <name>Mg(2+)</name>
        <dbReference type="ChEBI" id="CHEBI:18420"/>
    </ligand>
</feature>
<organism>
    <name type="scientific">Thermobifida fusca (strain YX)</name>
    <dbReference type="NCBI Taxonomy" id="269800"/>
    <lineage>
        <taxon>Bacteria</taxon>
        <taxon>Bacillati</taxon>
        <taxon>Actinomycetota</taxon>
        <taxon>Actinomycetes</taxon>
        <taxon>Streptosporangiales</taxon>
        <taxon>Nocardiopsidaceae</taxon>
        <taxon>Thermobifida</taxon>
    </lineage>
</organism>
<name>PANB_THEFY</name>